<proteinExistence type="evidence at transcript level"/>
<gene>
    <name type="primary">THFS</name>
    <name type="ordered locus">At1g50480</name>
    <name type="ORF">F11F12.17</name>
    <name type="ORF">F17J6.2</name>
</gene>
<protein>
    <recommendedName>
        <fullName>Formate--tetrahydrofolate ligase</fullName>
        <ecNumber>6.3.4.3</ecNumber>
    </recommendedName>
    <alternativeName>
        <fullName>10-formyletrahydrofolate synthetase</fullName>
        <shortName>FHS</shortName>
        <shortName>FTHFS</shortName>
    </alternativeName>
    <alternativeName>
        <fullName>Formyltetrahydrofolate synthetase</fullName>
    </alternativeName>
</protein>
<accession>Q9SPK5</accession>
<sequence length="634" mass="67802">MSSSTRKLEVVSPVPADIDIANSVEPLHISEIAKDLNINPLHYDLYGKYKAKVLLSAFDELQGQEDGYYVVVGGITPTPLGEGKSTTTVGLCQALGAYLDKKVVTCLRQPSQGPTFGIKGGAAGGGYSQVIPMDEFNLHLTGDIHAITASNNLLAAAIDTRIFHETSQSDKALFNRLCPPNKEGKRSFSDIMFRRLTKLGISKTSPEELTPEEIKKFARLDIDPASITWRRVMDVNDRFLRKITIGQGPEEKGMTRETGFDISVASEIMAVLALTTSLGDMRERLGKMVIGNSKAGDPITADDLGVGGALTVLMKDAINPTLMQTLEGTPVLVHAGPFANIAHGNSSIVADKIALKLVGPGGFVVTEAGFGSDIGTEKFMNIKCRYSGLTPQCAIVVATVRALKMHGGGPDVVAGRPLDRAYVSENVSLVEAGCVNLAKHISNTKAYGVNVIVAVNMFATDTEAELNAVRKFSMDAGAFDAVVCSHHAHSGKGAVDLGIAVEKACQNITQPLRFLYPLDIGIKDKIEAIAKSYGASGVEYSDQAEKQIEMYTQQGFSNLPICMSKTQYSFSHDASKKGAPSGFVLPIRDVRGSIGAGFIYPLVGTMSTMPGLPTRPCFYEIDIDTETGKVRGLS</sequence>
<keyword id="KW-0067">ATP-binding</keyword>
<keyword id="KW-0436">Ligase</keyword>
<keyword id="KW-0547">Nucleotide-binding</keyword>
<keyword id="KW-0554">One-carbon metabolism</keyword>
<keyword id="KW-1185">Reference proteome</keyword>
<comment type="catalytic activity">
    <reaction>
        <text>(6S)-5,6,7,8-tetrahydrofolate + formate + ATP = (6R)-10-formyltetrahydrofolate + ADP + phosphate</text>
        <dbReference type="Rhea" id="RHEA:20221"/>
        <dbReference type="ChEBI" id="CHEBI:15740"/>
        <dbReference type="ChEBI" id="CHEBI:30616"/>
        <dbReference type="ChEBI" id="CHEBI:43474"/>
        <dbReference type="ChEBI" id="CHEBI:57453"/>
        <dbReference type="ChEBI" id="CHEBI:195366"/>
        <dbReference type="ChEBI" id="CHEBI:456216"/>
        <dbReference type="EC" id="6.3.4.3"/>
    </reaction>
</comment>
<comment type="pathway">
    <text>One-carbon metabolism; tetrahydrofolate interconversion.</text>
</comment>
<comment type="subunit">
    <text evidence="1">Homodimer.</text>
</comment>
<comment type="similarity">
    <text evidence="2">Belongs to the formate--tetrahydrofolate ligase family.</text>
</comment>
<evidence type="ECO:0000250" key="1"/>
<evidence type="ECO:0000305" key="2"/>
<feature type="chain" id="PRO_0000199417" description="Formate--tetrahydrofolate ligase">
    <location>
        <begin position="1"/>
        <end position="634"/>
    </location>
</feature>
<feature type="binding site" evidence="1">
    <location>
        <begin position="78"/>
        <end position="85"/>
    </location>
    <ligand>
        <name>ATP</name>
        <dbReference type="ChEBI" id="CHEBI:30616"/>
    </ligand>
</feature>
<name>FTHS_ARATH</name>
<dbReference type="EC" id="6.3.4.3"/>
<dbReference type="EMBL" id="AF162279">
    <property type="protein sequence ID" value="AAD56290.1"/>
    <property type="molecule type" value="mRNA"/>
</dbReference>
<dbReference type="EMBL" id="AC012561">
    <property type="protein sequence ID" value="AAF87882.1"/>
    <property type="molecule type" value="Genomic_DNA"/>
</dbReference>
<dbReference type="EMBL" id="AC079279">
    <property type="protein sequence ID" value="AAG51185.1"/>
    <property type="molecule type" value="Genomic_DNA"/>
</dbReference>
<dbReference type="EMBL" id="CP002684">
    <property type="protein sequence ID" value="AEE32555.1"/>
    <property type="molecule type" value="Genomic_DNA"/>
</dbReference>
<dbReference type="EMBL" id="AY054637">
    <property type="protein sequence ID" value="AAK96828.1"/>
    <property type="molecule type" value="mRNA"/>
</dbReference>
<dbReference type="EMBL" id="AY081549">
    <property type="protein sequence ID" value="AAM10111.1"/>
    <property type="molecule type" value="mRNA"/>
</dbReference>
<dbReference type="PIR" id="C96541">
    <property type="entry name" value="C96541"/>
</dbReference>
<dbReference type="RefSeq" id="NP_564571.1">
    <property type="nucleotide sequence ID" value="NM_103931.4"/>
</dbReference>
<dbReference type="SMR" id="Q9SPK5"/>
<dbReference type="BioGRID" id="26695">
    <property type="interactions" value="7"/>
</dbReference>
<dbReference type="FunCoup" id="Q9SPK5">
    <property type="interactions" value="3946"/>
</dbReference>
<dbReference type="IntAct" id="Q9SPK5">
    <property type="interactions" value="1"/>
</dbReference>
<dbReference type="STRING" id="3702.Q9SPK5"/>
<dbReference type="GlyGen" id="Q9SPK5">
    <property type="glycosylation" value="1 site"/>
</dbReference>
<dbReference type="iPTMnet" id="Q9SPK5"/>
<dbReference type="MetOSite" id="Q9SPK5"/>
<dbReference type="PaxDb" id="3702-AT1G50480.1"/>
<dbReference type="ProteomicsDB" id="248554"/>
<dbReference type="EnsemblPlants" id="AT1G50480.1">
    <property type="protein sequence ID" value="AT1G50480.1"/>
    <property type="gene ID" value="AT1G50480"/>
</dbReference>
<dbReference type="GeneID" id="841470"/>
<dbReference type="Gramene" id="AT1G50480.1">
    <property type="protein sequence ID" value="AT1G50480.1"/>
    <property type="gene ID" value="AT1G50480"/>
</dbReference>
<dbReference type="KEGG" id="ath:AT1G50480"/>
<dbReference type="Araport" id="AT1G50480"/>
<dbReference type="TAIR" id="AT1G50480">
    <property type="gene designation" value="THFS"/>
</dbReference>
<dbReference type="eggNOG" id="ENOG502QSVW">
    <property type="taxonomic scope" value="Eukaryota"/>
</dbReference>
<dbReference type="HOGENOM" id="CLU_003601_3_3_1"/>
<dbReference type="InParanoid" id="Q9SPK5"/>
<dbReference type="OMA" id="KFWNLKC"/>
<dbReference type="PhylomeDB" id="Q9SPK5"/>
<dbReference type="BioCyc" id="ARA:AT1G50480-MONOMER"/>
<dbReference type="UniPathway" id="UPA00193"/>
<dbReference type="CD-CODE" id="4299E36E">
    <property type="entry name" value="Nucleolus"/>
</dbReference>
<dbReference type="PRO" id="PR:Q9SPK5"/>
<dbReference type="Proteomes" id="UP000006548">
    <property type="component" value="Chromosome 1"/>
</dbReference>
<dbReference type="ExpressionAtlas" id="Q9SPK5">
    <property type="expression patterns" value="baseline and differential"/>
</dbReference>
<dbReference type="GO" id="GO:0048046">
    <property type="term" value="C:apoplast"/>
    <property type="evidence" value="ECO:0007005"/>
    <property type="project" value="TAIR"/>
</dbReference>
<dbReference type="GO" id="GO:0009507">
    <property type="term" value="C:chloroplast"/>
    <property type="evidence" value="ECO:0007005"/>
    <property type="project" value="TAIR"/>
</dbReference>
<dbReference type="GO" id="GO:0005829">
    <property type="term" value="C:cytosol"/>
    <property type="evidence" value="ECO:0007005"/>
    <property type="project" value="TAIR"/>
</dbReference>
<dbReference type="GO" id="GO:0005634">
    <property type="term" value="C:nucleus"/>
    <property type="evidence" value="ECO:0007005"/>
    <property type="project" value="TAIR"/>
</dbReference>
<dbReference type="GO" id="GO:0005524">
    <property type="term" value="F:ATP binding"/>
    <property type="evidence" value="ECO:0007669"/>
    <property type="project" value="UniProtKB-KW"/>
</dbReference>
<dbReference type="GO" id="GO:0005507">
    <property type="term" value="F:copper ion binding"/>
    <property type="evidence" value="ECO:0007005"/>
    <property type="project" value="TAIR"/>
</dbReference>
<dbReference type="GO" id="GO:0004329">
    <property type="term" value="F:formate-tetrahydrofolate ligase activity"/>
    <property type="evidence" value="ECO:0007669"/>
    <property type="project" value="UniProtKB-EC"/>
</dbReference>
<dbReference type="GO" id="GO:0035999">
    <property type="term" value="P:tetrahydrofolate interconversion"/>
    <property type="evidence" value="ECO:0007669"/>
    <property type="project" value="UniProtKB-UniPathway"/>
</dbReference>
<dbReference type="CDD" id="cd00477">
    <property type="entry name" value="FTHFS"/>
    <property type="match status" value="1"/>
</dbReference>
<dbReference type="FunFam" id="3.40.50.300:FF:000245">
    <property type="entry name" value="C-1-tetrahydrofolate synthase, cytoplasmic"/>
    <property type="match status" value="1"/>
</dbReference>
<dbReference type="FunFam" id="3.40.50.300:FF:001123">
    <property type="entry name" value="C-1-tetrahydrofolate synthase, cytoplasmic isoform X2"/>
    <property type="match status" value="1"/>
</dbReference>
<dbReference type="FunFam" id="3.30.1510.10:FF:000003">
    <property type="entry name" value="Formate--tetrahydrofolate ligase"/>
    <property type="match status" value="1"/>
</dbReference>
<dbReference type="FunFam" id="1.10.8.770:FF:000001">
    <property type="entry name" value="Methylenetetrahydrofolate dehydrogenase (NADP+ dependent) 1 like"/>
    <property type="match status" value="1"/>
</dbReference>
<dbReference type="FunFam" id="3.10.410.10:FF:000001">
    <property type="entry name" value="Putative formate--tetrahydrofolate ligase"/>
    <property type="match status" value="1"/>
</dbReference>
<dbReference type="Gene3D" id="3.30.1510.10">
    <property type="entry name" value="Domain 2, N(10)-formyltetrahydrofolate synthetase"/>
    <property type="match status" value="1"/>
</dbReference>
<dbReference type="Gene3D" id="3.10.410.10">
    <property type="entry name" value="Formyltetrahydrofolate synthetase, domain 3"/>
    <property type="match status" value="1"/>
</dbReference>
<dbReference type="Gene3D" id="3.40.50.300">
    <property type="entry name" value="P-loop containing nucleotide triphosphate hydrolases"/>
    <property type="match status" value="2"/>
</dbReference>
<dbReference type="HAMAP" id="MF_01543">
    <property type="entry name" value="FTHFS"/>
    <property type="match status" value="1"/>
</dbReference>
<dbReference type="InterPro" id="IPR000559">
    <property type="entry name" value="Formate_THF_ligase"/>
</dbReference>
<dbReference type="InterPro" id="IPR020628">
    <property type="entry name" value="Formate_THF_ligase_CS"/>
</dbReference>
<dbReference type="InterPro" id="IPR027417">
    <property type="entry name" value="P-loop_NTPase"/>
</dbReference>
<dbReference type="Pfam" id="PF01268">
    <property type="entry name" value="FTHFS"/>
    <property type="match status" value="1"/>
</dbReference>
<dbReference type="SUPFAM" id="SSF52540">
    <property type="entry name" value="P-loop containing nucleoside triphosphate hydrolases"/>
    <property type="match status" value="1"/>
</dbReference>
<dbReference type="PROSITE" id="PS00721">
    <property type="entry name" value="FTHFS_1"/>
    <property type="match status" value="1"/>
</dbReference>
<dbReference type="PROSITE" id="PS00722">
    <property type="entry name" value="FTHFS_2"/>
    <property type="match status" value="1"/>
</dbReference>
<organism>
    <name type="scientific">Arabidopsis thaliana</name>
    <name type="common">Mouse-ear cress</name>
    <dbReference type="NCBI Taxonomy" id="3702"/>
    <lineage>
        <taxon>Eukaryota</taxon>
        <taxon>Viridiplantae</taxon>
        <taxon>Streptophyta</taxon>
        <taxon>Embryophyta</taxon>
        <taxon>Tracheophyta</taxon>
        <taxon>Spermatophyta</taxon>
        <taxon>Magnoliopsida</taxon>
        <taxon>eudicotyledons</taxon>
        <taxon>Gunneridae</taxon>
        <taxon>Pentapetalae</taxon>
        <taxon>rosids</taxon>
        <taxon>malvids</taxon>
        <taxon>Brassicales</taxon>
        <taxon>Brassicaceae</taxon>
        <taxon>Camelineae</taxon>
        <taxon>Arabidopsis</taxon>
    </lineage>
</organism>
<reference key="1">
    <citation type="online journal article" date="1999" name="Plant Gene Register">
        <title>Nucleotide sequence of a cDNA encoding 10-formyletrahydrofolate synthetase from Arabidopsis thaliana.</title>
        <authorList>
            <person name="Skavdahl M."/>
            <person name="Olson B.J.S.C."/>
            <person name="Markwell J."/>
            <person name="Osterman J.C."/>
        </authorList>
        <locator>PGR99-133</locator>
    </citation>
    <scope>NUCLEOTIDE SEQUENCE [MRNA]</scope>
    <source>
        <strain>cv. Columbia</strain>
        <tissue>Hypocotyl</tissue>
    </source>
</reference>
<reference key="2">
    <citation type="journal article" date="2000" name="Nature">
        <title>Sequence and analysis of chromosome 1 of the plant Arabidopsis thaliana.</title>
        <authorList>
            <person name="Theologis A."/>
            <person name="Ecker J.R."/>
            <person name="Palm C.J."/>
            <person name="Federspiel N.A."/>
            <person name="Kaul S."/>
            <person name="White O."/>
            <person name="Alonso J."/>
            <person name="Altafi H."/>
            <person name="Araujo R."/>
            <person name="Bowman C.L."/>
            <person name="Brooks S.Y."/>
            <person name="Buehler E."/>
            <person name="Chan A."/>
            <person name="Chao Q."/>
            <person name="Chen H."/>
            <person name="Cheuk R.F."/>
            <person name="Chin C.W."/>
            <person name="Chung M.K."/>
            <person name="Conn L."/>
            <person name="Conway A.B."/>
            <person name="Conway A.R."/>
            <person name="Creasy T.H."/>
            <person name="Dewar K."/>
            <person name="Dunn P."/>
            <person name="Etgu P."/>
            <person name="Feldblyum T.V."/>
            <person name="Feng J.-D."/>
            <person name="Fong B."/>
            <person name="Fujii C.Y."/>
            <person name="Gill J.E."/>
            <person name="Goldsmith A.D."/>
            <person name="Haas B."/>
            <person name="Hansen N.F."/>
            <person name="Hughes B."/>
            <person name="Huizar L."/>
            <person name="Hunter J.L."/>
            <person name="Jenkins J."/>
            <person name="Johnson-Hopson C."/>
            <person name="Khan S."/>
            <person name="Khaykin E."/>
            <person name="Kim C.J."/>
            <person name="Koo H.L."/>
            <person name="Kremenetskaia I."/>
            <person name="Kurtz D.B."/>
            <person name="Kwan A."/>
            <person name="Lam B."/>
            <person name="Langin-Hooper S."/>
            <person name="Lee A."/>
            <person name="Lee J.M."/>
            <person name="Lenz C.A."/>
            <person name="Li J.H."/>
            <person name="Li Y.-P."/>
            <person name="Lin X."/>
            <person name="Liu S.X."/>
            <person name="Liu Z.A."/>
            <person name="Luros J.S."/>
            <person name="Maiti R."/>
            <person name="Marziali A."/>
            <person name="Militscher J."/>
            <person name="Miranda M."/>
            <person name="Nguyen M."/>
            <person name="Nierman W.C."/>
            <person name="Osborne B.I."/>
            <person name="Pai G."/>
            <person name="Peterson J."/>
            <person name="Pham P.K."/>
            <person name="Rizzo M."/>
            <person name="Rooney T."/>
            <person name="Rowley D."/>
            <person name="Sakano H."/>
            <person name="Salzberg S.L."/>
            <person name="Schwartz J.R."/>
            <person name="Shinn P."/>
            <person name="Southwick A.M."/>
            <person name="Sun H."/>
            <person name="Tallon L.J."/>
            <person name="Tambunga G."/>
            <person name="Toriumi M.J."/>
            <person name="Town C.D."/>
            <person name="Utterback T."/>
            <person name="Van Aken S."/>
            <person name="Vaysberg M."/>
            <person name="Vysotskaia V.S."/>
            <person name="Walker M."/>
            <person name="Wu D."/>
            <person name="Yu G."/>
            <person name="Fraser C.M."/>
            <person name="Venter J.C."/>
            <person name="Davis R.W."/>
        </authorList>
    </citation>
    <scope>NUCLEOTIDE SEQUENCE [LARGE SCALE GENOMIC DNA]</scope>
    <source>
        <strain>cv. Columbia</strain>
    </source>
</reference>
<reference key="3">
    <citation type="journal article" date="2017" name="Plant J.">
        <title>Araport11: a complete reannotation of the Arabidopsis thaliana reference genome.</title>
        <authorList>
            <person name="Cheng C.Y."/>
            <person name="Krishnakumar V."/>
            <person name="Chan A.P."/>
            <person name="Thibaud-Nissen F."/>
            <person name="Schobel S."/>
            <person name="Town C.D."/>
        </authorList>
    </citation>
    <scope>GENOME REANNOTATION</scope>
    <source>
        <strain>cv. Columbia</strain>
    </source>
</reference>
<reference key="4">
    <citation type="journal article" date="2003" name="Science">
        <title>Empirical analysis of transcriptional activity in the Arabidopsis genome.</title>
        <authorList>
            <person name="Yamada K."/>
            <person name="Lim J."/>
            <person name="Dale J.M."/>
            <person name="Chen H."/>
            <person name="Shinn P."/>
            <person name="Palm C.J."/>
            <person name="Southwick A.M."/>
            <person name="Wu H.C."/>
            <person name="Kim C.J."/>
            <person name="Nguyen M."/>
            <person name="Pham P.K."/>
            <person name="Cheuk R.F."/>
            <person name="Karlin-Newmann G."/>
            <person name="Liu S.X."/>
            <person name="Lam B."/>
            <person name="Sakano H."/>
            <person name="Wu T."/>
            <person name="Yu G."/>
            <person name="Miranda M."/>
            <person name="Quach H.L."/>
            <person name="Tripp M."/>
            <person name="Chang C.H."/>
            <person name="Lee J.M."/>
            <person name="Toriumi M.J."/>
            <person name="Chan M.M."/>
            <person name="Tang C.C."/>
            <person name="Onodera C.S."/>
            <person name="Deng J.M."/>
            <person name="Akiyama K."/>
            <person name="Ansari Y."/>
            <person name="Arakawa T."/>
            <person name="Banh J."/>
            <person name="Banno F."/>
            <person name="Bowser L."/>
            <person name="Brooks S.Y."/>
            <person name="Carninci P."/>
            <person name="Chao Q."/>
            <person name="Choy N."/>
            <person name="Enju A."/>
            <person name="Goldsmith A.D."/>
            <person name="Gurjal M."/>
            <person name="Hansen N.F."/>
            <person name="Hayashizaki Y."/>
            <person name="Johnson-Hopson C."/>
            <person name="Hsuan V.W."/>
            <person name="Iida K."/>
            <person name="Karnes M."/>
            <person name="Khan S."/>
            <person name="Koesema E."/>
            <person name="Ishida J."/>
            <person name="Jiang P.X."/>
            <person name="Jones T."/>
            <person name="Kawai J."/>
            <person name="Kamiya A."/>
            <person name="Meyers C."/>
            <person name="Nakajima M."/>
            <person name="Narusaka M."/>
            <person name="Seki M."/>
            <person name="Sakurai T."/>
            <person name="Satou M."/>
            <person name="Tamse R."/>
            <person name="Vaysberg M."/>
            <person name="Wallender E.K."/>
            <person name="Wong C."/>
            <person name="Yamamura Y."/>
            <person name="Yuan S."/>
            <person name="Shinozaki K."/>
            <person name="Davis R.W."/>
            <person name="Theologis A."/>
            <person name="Ecker J.R."/>
        </authorList>
    </citation>
    <scope>NUCLEOTIDE SEQUENCE [LARGE SCALE MRNA]</scope>
    <source>
        <strain>cv. Columbia</strain>
    </source>
</reference>